<accession>P66309</accession>
<accession>Q8NL34</accession>
<name>RL36_XANAC</name>
<protein>
    <recommendedName>
        <fullName evidence="1">Large ribosomal subunit protein bL36</fullName>
    </recommendedName>
    <alternativeName>
        <fullName evidence="2">50S ribosomal protein L36</fullName>
    </alternativeName>
</protein>
<evidence type="ECO:0000255" key="1">
    <source>
        <dbReference type="HAMAP-Rule" id="MF_00251"/>
    </source>
</evidence>
<evidence type="ECO:0000305" key="2"/>
<reference key="1">
    <citation type="journal article" date="2002" name="Nature">
        <title>Comparison of the genomes of two Xanthomonas pathogens with differing host specificities.</title>
        <authorList>
            <person name="da Silva A.C.R."/>
            <person name="Ferro J.A."/>
            <person name="Reinach F.C."/>
            <person name="Farah C.S."/>
            <person name="Furlan L.R."/>
            <person name="Quaggio R.B."/>
            <person name="Monteiro-Vitorello C.B."/>
            <person name="Van Sluys M.A."/>
            <person name="Almeida N.F. Jr."/>
            <person name="Alves L.M.C."/>
            <person name="do Amaral A.M."/>
            <person name="Bertolini M.C."/>
            <person name="Camargo L.E.A."/>
            <person name="Camarotte G."/>
            <person name="Cannavan F."/>
            <person name="Cardozo J."/>
            <person name="Chambergo F."/>
            <person name="Ciapina L.P."/>
            <person name="Cicarelli R.M.B."/>
            <person name="Coutinho L.L."/>
            <person name="Cursino-Santos J.R."/>
            <person name="El-Dorry H."/>
            <person name="Faria J.B."/>
            <person name="Ferreira A.J.S."/>
            <person name="Ferreira R.C.C."/>
            <person name="Ferro M.I.T."/>
            <person name="Formighieri E.F."/>
            <person name="Franco M.C."/>
            <person name="Greggio C.C."/>
            <person name="Gruber A."/>
            <person name="Katsuyama A.M."/>
            <person name="Kishi L.T."/>
            <person name="Leite R.P."/>
            <person name="Lemos E.G.M."/>
            <person name="Lemos M.V.F."/>
            <person name="Locali E.C."/>
            <person name="Machado M.A."/>
            <person name="Madeira A.M.B.N."/>
            <person name="Martinez-Rossi N.M."/>
            <person name="Martins E.C."/>
            <person name="Meidanis J."/>
            <person name="Menck C.F.M."/>
            <person name="Miyaki C.Y."/>
            <person name="Moon D.H."/>
            <person name="Moreira L.M."/>
            <person name="Novo M.T.M."/>
            <person name="Okura V.K."/>
            <person name="Oliveira M.C."/>
            <person name="Oliveira V.R."/>
            <person name="Pereira H.A."/>
            <person name="Rossi A."/>
            <person name="Sena J.A.D."/>
            <person name="Silva C."/>
            <person name="de Souza R.F."/>
            <person name="Spinola L.A.F."/>
            <person name="Takita M.A."/>
            <person name="Tamura R.E."/>
            <person name="Teixeira E.C."/>
            <person name="Tezza R.I.D."/>
            <person name="Trindade dos Santos M."/>
            <person name="Truffi D."/>
            <person name="Tsai S.M."/>
            <person name="White F.F."/>
            <person name="Setubal J.C."/>
            <person name="Kitajima J.P."/>
        </authorList>
    </citation>
    <scope>NUCLEOTIDE SEQUENCE [LARGE SCALE GENOMIC DNA]</scope>
    <source>
        <strain>306</strain>
    </source>
</reference>
<sequence>MKVLSSLKSAKTRHRDCKVVRRRGKVFVICKSNPRFKARQR</sequence>
<gene>
    <name evidence="1" type="primary">rpmJ</name>
    <name type="ordered locus">XAC2300</name>
</gene>
<keyword id="KW-0687">Ribonucleoprotein</keyword>
<keyword id="KW-0689">Ribosomal protein</keyword>
<proteinExistence type="inferred from homology"/>
<organism>
    <name type="scientific">Xanthomonas axonopodis pv. citri (strain 306)</name>
    <dbReference type="NCBI Taxonomy" id="190486"/>
    <lineage>
        <taxon>Bacteria</taxon>
        <taxon>Pseudomonadati</taxon>
        <taxon>Pseudomonadota</taxon>
        <taxon>Gammaproteobacteria</taxon>
        <taxon>Lysobacterales</taxon>
        <taxon>Lysobacteraceae</taxon>
        <taxon>Xanthomonas</taxon>
    </lineage>
</organism>
<comment type="similarity">
    <text evidence="1">Belongs to the bacterial ribosomal protein bL36 family.</text>
</comment>
<dbReference type="EMBL" id="AE008923">
    <property type="protein sequence ID" value="AAM37153.1"/>
    <property type="molecule type" value="Genomic_DNA"/>
</dbReference>
<dbReference type="SMR" id="P66309"/>
<dbReference type="KEGG" id="xac:XAC2300"/>
<dbReference type="eggNOG" id="COG0257">
    <property type="taxonomic scope" value="Bacteria"/>
</dbReference>
<dbReference type="HOGENOM" id="CLU_135723_3_3_6"/>
<dbReference type="Proteomes" id="UP000000576">
    <property type="component" value="Chromosome"/>
</dbReference>
<dbReference type="GO" id="GO:1990904">
    <property type="term" value="C:ribonucleoprotein complex"/>
    <property type="evidence" value="ECO:0007669"/>
    <property type="project" value="UniProtKB-KW"/>
</dbReference>
<dbReference type="GO" id="GO:0005840">
    <property type="term" value="C:ribosome"/>
    <property type="evidence" value="ECO:0007669"/>
    <property type="project" value="UniProtKB-KW"/>
</dbReference>
<dbReference type="GO" id="GO:0003735">
    <property type="term" value="F:structural constituent of ribosome"/>
    <property type="evidence" value="ECO:0007669"/>
    <property type="project" value="InterPro"/>
</dbReference>
<dbReference type="GO" id="GO:0006412">
    <property type="term" value="P:translation"/>
    <property type="evidence" value="ECO:0007669"/>
    <property type="project" value="UniProtKB-UniRule"/>
</dbReference>
<dbReference type="HAMAP" id="MF_00251">
    <property type="entry name" value="Ribosomal_bL36"/>
    <property type="match status" value="1"/>
</dbReference>
<dbReference type="InterPro" id="IPR000473">
    <property type="entry name" value="Ribosomal_bL36"/>
</dbReference>
<dbReference type="InterPro" id="IPR035977">
    <property type="entry name" value="Ribosomal_bL36_sp"/>
</dbReference>
<dbReference type="InterPro" id="IPR047621">
    <property type="entry name" value="Ribosomal_L36_bact"/>
</dbReference>
<dbReference type="NCBIfam" id="NF002021">
    <property type="entry name" value="PRK00831.1"/>
    <property type="match status" value="1"/>
</dbReference>
<dbReference type="NCBIfam" id="TIGR01022">
    <property type="entry name" value="rpmJ_bact"/>
    <property type="match status" value="1"/>
</dbReference>
<dbReference type="PANTHER" id="PTHR47781">
    <property type="entry name" value="50S RIBOSOMAL PROTEIN L36 2"/>
    <property type="match status" value="1"/>
</dbReference>
<dbReference type="PANTHER" id="PTHR47781:SF1">
    <property type="entry name" value="LARGE RIBOSOMAL SUBUNIT PROTEIN BL36B"/>
    <property type="match status" value="1"/>
</dbReference>
<dbReference type="Pfam" id="PF00444">
    <property type="entry name" value="Ribosomal_L36"/>
    <property type="match status" value="1"/>
</dbReference>
<dbReference type="SUPFAM" id="SSF57840">
    <property type="entry name" value="Ribosomal protein L36"/>
    <property type="match status" value="1"/>
</dbReference>
<dbReference type="PROSITE" id="PS00828">
    <property type="entry name" value="RIBOSOMAL_L36"/>
    <property type="match status" value="1"/>
</dbReference>
<feature type="chain" id="PRO_0000126298" description="Large ribosomal subunit protein bL36">
    <location>
        <begin position="1"/>
        <end position="41"/>
    </location>
</feature>